<proteinExistence type="inferred from homology"/>
<reference key="1">
    <citation type="journal article" date="1997" name="Biochem. Biophys. Res. Commun.">
        <title>The stabilizing residues and the functional domains in the hyperthermophilic V-ATPase of Desulfurococcus.</title>
        <authorList>
            <person name="Shibui H."/>
            <person name="Hamamoto T."/>
            <person name="Yohda M."/>
            <person name="Kagawa Y."/>
        </authorList>
    </citation>
    <scope>NUCLEOTIDE SEQUENCE [GENOMIC DNA]</scope>
    <source>
        <strain>SY</strain>
    </source>
</reference>
<keyword id="KW-0066">ATP synthesis</keyword>
<keyword id="KW-1003">Cell membrane</keyword>
<keyword id="KW-0375">Hydrogen ion transport</keyword>
<keyword id="KW-0406">Ion transport</keyword>
<keyword id="KW-0472">Membrane</keyword>
<keyword id="KW-0813">Transport</keyword>
<name>AATC_DESSY</name>
<evidence type="ECO:0000255" key="1">
    <source>
        <dbReference type="HAMAP-Rule" id="MF_00314"/>
    </source>
</evidence>
<evidence type="ECO:0000303" key="2">
    <source>
    </source>
</evidence>
<dbReference type="EMBL" id="U96487">
    <property type="protein sequence ID" value="AAB64414.1"/>
    <property type="molecule type" value="Genomic_DNA"/>
</dbReference>
<dbReference type="PIR" id="T44672">
    <property type="entry name" value="T44672"/>
</dbReference>
<dbReference type="SMR" id="O06502"/>
<dbReference type="GO" id="GO:0005886">
    <property type="term" value="C:plasma membrane"/>
    <property type="evidence" value="ECO:0007669"/>
    <property type="project" value="UniProtKB-SubCell"/>
</dbReference>
<dbReference type="GO" id="GO:0033179">
    <property type="term" value="C:proton-transporting V-type ATPase, V0 domain"/>
    <property type="evidence" value="ECO:0007669"/>
    <property type="project" value="InterPro"/>
</dbReference>
<dbReference type="GO" id="GO:0005524">
    <property type="term" value="F:ATP binding"/>
    <property type="evidence" value="ECO:0007669"/>
    <property type="project" value="UniProtKB-UniRule"/>
</dbReference>
<dbReference type="GO" id="GO:0046933">
    <property type="term" value="F:proton-transporting ATP synthase activity, rotational mechanism"/>
    <property type="evidence" value="ECO:0007669"/>
    <property type="project" value="UniProtKB-UniRule"/>
</dbReference>
<dbReference type="GO" id="GO:0046961">
    <property type="term" value="F:proton-transporting ATPase activity, rotational mechanism"/>
    <property type="evidence" value="ECO:0007669"/>
    <property type="project" value="InterPro"/>
</dbReference>
<dbReference type="GO" id="GO:0042777">
    <property type="term" value="P:proton motive force-driven plasma membrane ATP synthesis"/>
    <property type="evidence" value="ECO:0007669"/>
    <property type="project" value="UniProtKB-UniRule"/>
</dbReference>
<dbReference type="Gene3D" id="1.10.132.50">
    <property type="entry name" value="ATP synthase (C/AC39) subunit, domain 3"/>
    <property type="match status" value="1"/>
</dbReference>
<dbReference type="Gene3D" id="1.20.1690.10">
    <property type="entry name" value="V-type ATP synthase subunit C domain"/>
    <property type="match status" value="2"/>
</dbReference>
<dbReference type="HAMAP" id="MF_00314">
    <property type="entry name" value="ATP_synth_C_arch"/>
    <property type="match status" value="1"/>
</dbReference>
<dbReference type="InterPro" id="IPR036079">
    <property type="entry name" value="ATPase_csu/dsu_sf"/>
</dbReference>
<dbReference type="InterPro" id="IPR014272">
    <property type="entry name" value="ATPase_V0-cplx_csu"/>
</dbReference>
<dbReference type="InterPro" id="IPR002843">
    <property type="entry name" value="ATPase_V0-cplx_csu/dsu"/>
</dbReference>
<dbReference type="InterPro" id="IPR050873">
    <property type="entry name" value="V-ATPase_V0D/AC39_subunit"/>
</dbReference>
<dbReference type="InterPro" id="IPR035067">
    <property type="entry name" value="V-type_ATPase_csu/dsu"/>
</dbReference>
<dbReference type="InterPro" id="IPR044911">
    <property type="entry name" value="V-type_ATPase_csu/dsu_dom_3"/>
</dbReference>
<dbReference type="NCBIfam" id="TIGR02923">
    <property type="entry name" value="AhaC"/>
    <property type="match status" value="1"/>
</dbReference>
<dbReference type="NCBIfam" id="NF002269">
    <property type="entry name" value="PRK01198.1-5"/>
    <property type="match status" value="1"/>
</dbReference>
<dbReference type="PANTHER" id="PTHR38682">
    <property type="entry name" value="V-TYPE ATP SYNTHASE SUBUNIT C"/>
    <property type="match status" value="1"/>
</dbReference>
<dbReference type="PANTHER" id="PTHR38682:SF1">
    <property type="entry name" value="V-TYPE ATP SYNTHASE SUBUNIT C"/>
    <property type="match status" value="1"/>
</dbReference>
<dbReference type="Pfam" id="PF01992">
    <property type="entry name" value="vATP-synt_AC39"/>
    <property type="match status" value="1"/>
</dbReference>
<dbReference type="SUPFAM" id="SSF103486">
    <property type="entry name" value="V-type ATP synthase subunit C"/>
    <property type="match status" value="1"/>
</dbReference>
<protein>
    <recommendedName>
        <fullName evidence="1">A-type ATP synthase subunit C</fullName>
    </recommendedName>
    <alternativeName>
        <fullName evidence="2">V-ATPase subunit C</fullName>
    </alternativeName>
</protein>
<accession>O06502</accession>
<sequence length="364" mass="41659">MEAVTGILNTTIAVVFTWVGYKTARIIWKYTPYSYPNARIKAMEAKLLTEQKFNELAESRTLQNFVVNLEDTDYKDYLADVSSYTVEEVEKALERALAGTYELMFKILPKRSKGFFELLLEGWDVRNIANVVKAKLANEPASDYVVELGTMLPKVKAMAEAKTLEEILVILEGTPYEEVYQKLLLGEIDVTRFETELYRMHYGKLLSYALSRKDDERIILEEFVRLSIDRVNILTALRAKKAGLSAEEIKPMLIPGGTVKLDPLLHVDSFDMALAELDSTKYGQVIRDVREEIEKDLSVLEKALNDHIIERISELERFYPLSIATPLSYVLRREREIRKLRAIAKLIENGVEPERIKELAGEVA</sequence>
<gene>
    <name evidence="1 2" type="primary">atpC</name>
</gene>
<organism>
    <name type="scientific">Desulfurococcus sp. (strain SY)</name>
    <dbReference type="NCBI Taxonomy" id="59822"/>
    <lineage>
        <taxon>Archaea</taxon>
        <taxon>Thermoproteota</taxon>
        <taxon>Thermoprotei</taxon>
        <taxon>Desulfurococcales</taxon>
        <taxon>Desulfurococcaceae</taxon>
        <taxon>Desulfurococcus</taxon>
    </lineage>
</organism>
<feature type="chain" id="PRO_0000119362" description="A-type ATP synthase subunit C">
    <location>
        <begin position="1"/>
        <end position="364"/>
    </location>
</feature>
<comment type="function">
    <text evidence="1">Component of the A-type ATP synthase that produces ATP from ADP in the presence of a proton gradient across the membrane.</text>
</comment>
<comment type="subunit">
    <text evidence="1">Has multiple subunits with at least A(3), B(3), C, D, E, F, H, I and proteolipid K(x).</text>
</comment>
<comment type="subcellular location">
    <subcellularLocation>
        <location evidence="1">Cell membrane</location>
        <topology evidence="1">Peripheral membrane protein</topology>
    </subcellularLocation>
</comment>
<comment type="similarity">
    <text evidence="1">Belongs to the V-ATPase V0D/AC39 subunit family.</text>
</comment>